<reference key="1">
    <citation type="journal article" date="2008" name="PLoS ONE">
        <title>Survival in nuclear waste, extreme resistance, and potential applications gleaned from the genome sequence of Kineococcus radiotolerans SRS30216.</title>
        <authorList>
            <person name="Bagwell C.E."/>
            <person name="Bhat S."/>
            <person name="Hawkins G.M."/>
            <person name="Smith B.W."/>
            <person name="Biswas T."/>
            <person name="Hoover T.R."/>
            <person name="Saunders E."/>
            <person name="Han C.S."/>
            <person name="Tsodikov O.V."/>
            <person name="Shimkets L.J."/>
        </authorList>
    </citation>
    <scope>NUCLEOTIDE SEQUENCE [LARGE SCALE GENOMIC DNA]</scope>
    <source>
        <strain>ATCC BAA-149 / DSM 14245 / SRS30216</strain>
    </source>
</reference>
<comment type="function">
    <text evidence="1">Peptide chain release factor 1 directs the termination of translation in response to the peptide chain termination codons UAG and UAA.</text>
</comment>
<comment type="subcellular location">
    <subcellularLocation>
        <location evidence="1">Cytoplasm</location>
    </subcellularLocation>
</comment>
<comment type="PTM">
    <text evidence="1">Methylated by PrmC. Methylation increases the termination efficiency of RF1.</text>
</comment>
<comment type="similarity">
    <text evidence="1">Belongs to the prokaryotic/mitochondrial release factor family.</text>
</comment>
<gene>
    <name evidence="1" type="primary">prfA</name>
    <name type="ordered locus">Krad_1257</name>
</gene>
<name>RF1_KINRD</name>
<organism>
    <name type="scientific">Kineococcus radiotolerans (strain ATCC BAA-149 / DSM 14245 / SRS30216)</name>
    <dbReference type="NCBI Taxonomy" id="266940"/>
    <lineage>
        <taxon>Bacteria</taxon>
        <taxon>Bacillati</taxon>
        <taxon>Actinomycetota</taxon>
        <taxon>Actinomycetes</taxon>
        <taxon>Kineosporiales</taxon>
        <taxon>Kineosporiaceae</taxon>
        <taxon>Kineococcus</taxon>
    </lineage>
</organism>
<dbReference type="EMBL" id="CP000750">
    <property type="protein sequence ID" value="ABS02745.1"/>
    <property type="molecule type" value="Genomic_DNA"/>
</dbReference>
<dbReference type="RefSeq" id="WP_012084399.1">
    <property type="nucleotide sequence ID" value="NC_009664.2"/>
</dbReference>
<dbReference type="SMR" id="A6W7F6"/>
<dbReference type="STRING" id="266940.Krad_1257"/>
<dbReference type="KEGG" id="kra:Krad_1257"/>
<dbReference type="eggNOG" id="COG0216">
    <property type="taxonomic scope" value="Bacteria"/>
</dbReference>
<dbReference type="HOGENOM" id="CLU_036856_0_1_11"/>
<dbReference type="OrthoDB" id="9806673at2"/>
<dbReference type="Proteomes" id="UP000001116">
    <property type="component" value="Chromosome"/>
</dbReference>
<dbReference type="GO" id="GO:0005737">
    <property type="term" value="C:cytoplasm"/>
    <property type="evidence" value="ECO:0007669"/>
    <property type="project" value="UniProtKB-SubCell"/>
</dbReference>
<dbReference type="GO" id="GO:0016149">
    <property type="term" value="F:translation release factor activity, codon specific"/>
    <property type="evidence" value="ECO:0007669"/>
    <property type="project" value="UniProtKB-UniRule"/>
</dbReference>
<dbReference type="FunFam" id="3.30.160.20:FF:000004">
    <property type="entry name" value="Peptide chain release factor 1"/>
    <property type="match status" value="1"/>
</dbReference>
<dbReference type="FunFam" id="3.30.70.1660:FF:000002">
    <property type="entry name" value="Peptide chain release factor 1"/>
    <property type="match status" value="1"/>
</dbReference>
<dbReference type="Gene3D" id="3.30.160.20">
    <property type="match status" value="1"/>
</dbReference>
<dbReference type="Gene3D" id="3.30.70.1660">
    <property type="match status" value="1"/>
</dbReference>
<dbReference type="Gene3D" id="6.10.140.1950">
    <property type="match status" value="1"/>
</dbReference>
<dbReference type="HAMAP" id="MF_00093">
    <property type="entry name" value="Rel_fac_1"/>
    <property type="match status" value="1"/>
</dbReference>
<dbReference type="InterPro" id="IPR005139">
    <property type="entry name" value="PCRF"/>
</dbReference>
<dbReference type="InterPro" id="IPR000352">
    <property type="entry name" value="Pep_chain_release_fac_I"/>
</dbReference>
<dbReference type="InterPro" id="IPR045853">
    <property type="entry name" value="Pep_chain_release_fac_I_sf"/>
</dbReference>
<dbReference type="InterPro" id="IPR050057">
    <property type="entry name" value="Prokaryotic/Mito_RF"/>
</dbReference>
<dbReference type="InterPro" id="IPR004373">
    <property type="entry name" value="RF-1"/>
</dbReference>
<dbReference type="NCBIfam" id="TIGR00019">
    <property type="entry name" value="prfA"/>
    <property type="match status" value="1"/>
</dbReference>
<dbReference type="NCBIfam" id="NF001859">
    <property type="entry name" value="PRK00591.1"/>
    <property type="match status" value="1"/>
</dbReference>
<dbReference type="PANTHER" id="PTHR43804">
    <property type="entry name" value="LD18447P"/>
    <property type="match status" value="1"/>
</dbReference>
<dbReference type="PANTHER" id="PTHR43804:SF7">
    <property type="entry name" value="LD18447P"/>
    <property type="match status" value="1"/>
</dbReference>
<dbReference type="Pfam" id="PF03462">
    <property type="entry name" value="PCRF"/>
    <property type="match status" value="1"/>
</dbReference>
<dbReference type="Pfam" id="PF00472">
    <property type="entry name" value="RF-1"/>
    <property type="match status" value="1"/>
</dbReference>
<dbReference type="SMART" id="SM00937">
    <property type="entry name" value="PCRF"/>
    <property type="match status" value="1"/>
</dbReference>
<dbReference type="SUPFAM" id="SSF75620">
    <property type="entry name" value="Release factor"/>
    <property type="match status" value="1"/>
</dbReference>
<dbReference type="PROSITE" id="PS00745">
    <property type="entry name" value="RF_PROK_I"/>
    <property type="match status" value="1"/>
</dbReference>
<proteinExistence type="inferred from homology"/>
<protein>
    <recommendedName>
        <fullName evidence="1">Peptide chain release factor 1</fullName>
        <shortName evidence="1">RF-1</shortName>
    </recommendedName>
</protein>
<keyword id="KW-0963">Cytoplasm</keyword>
<keyword id="KW-0488">Methylation</keyword>
<keyword id="KW-0648">Protein biosynthesis</keyword>
<keyword id="KW-1185">Reference proteome</keyword>
<sequence>MFEAVTPLLDEHAELERRLADPAVHADAALARTLGRRYAELGAVVVAHAAWRAAADDAEAARELAAEDAAFAAELPALQRAAEEAGEKLRRLLLPRDPDDSRDVILEIKAGEGGEESALFAGDLLRMYLRYAERHGWVTEVLDANPSDLGGYKDVSVAVKTRGAAAEGVWHRLKYEGGVHRVQRVPVTESQGRVHTSAVGVLVVPEAEEVEVAVDPNDLRVDVFRSSGPGGQSVNTTDSAVRITHLPTGVVATCQNEKSQLQNREQAMRILRARLHALAQEAADAQASAARRSQVRTVDRSERVRTYNYGENRIADHRTGFKAYNLDTVLDGDLDPVIQSAIDADEAAQLAATSV</sequence>
<evidence type="ECO:0000255" key="1">
    <source>
        <dbReference type="HAMAP-Rule" id="MF_00093"/>
    </source>
</evidence>
<feature type="chain" id="PRO_1000075501" description="Peptide chain release factor 1">
    <location>
        <begin position="1"/>
        <end position="355"/>
    </location>
</feature>
<feature type="modified residue" description="N5-methylglutamine" evidence="1">
    <location>
        <position position="232"/>
    </location>
</feature>
<accession>A6W7F6</accession>